<gene>
    <name type="primary">M1ap</name>
    <name type="synonym">D6Mm5e</name>
    <name type="synonym">Spata37</name>
</gene>
<protein>
    <recommendedName>
        <fullName>Meiosis 1 arrest protein</fullName>
    </recommendedName>
    <alternativeName>
        <fullName>Meiosis 1-arresting protein</fullName>
    </alternativeName>
    <alternativeName>
        <fullName>Meiosis 1-associated protein</fullName>
    </alternativeName>
    <alternativeName>
        <fullName>Spermatogenesis-associated protein 37</fullName>
    </alternativeName>
</protein>
<feature type="chain" id="PRO_0000349269" description="Meiosis 1 arrest protein">
    <location>
        <begin position="1"/>
        <end position="529"/>
    </location>
</feature>
<feature type="region of interest" description="Disordered" evidence="1">
    <location>
        <begin position="180"/>
        <end position="201"/>
    </location>
</feature>
<feature type="region of interest" description="Disordered" evidence="1">
    <location>
        <begin position="504"/>
        <end position="529"/>
    </location>
</feature>
<feature type="compositionally biased region" description="Polar residues" evidence="1">
    <location>
        <begin position="188"/>
        <end position="200"/>
    </location>
</feature>
<feature type="modified residue" description="Phosphoserine" evidence="6">
    <location>
        <position position="516"/>
    </location>
</feature>
<feature type="sequence conflict" description="In Ref. 1; AAC95337/AAC95350." evidence="5" ref="1">
    <original>H</original>
    <variation>P</variation>
    <location>
        <position position="373"/>
    </location>
</feature>
<evidence type="ECO:0000256" key="1">
    <source>
        <dbReference type="SAM" id="MobiDB-lite"/>
    </source>
</evidence>
<evidence type="ECO:0000269" key="2">
    <source>
    </source>
</evidence>
<evidence type="ECO:0000269" key="3">
    <source>
    </source>
</evidence>
<evidence type="ECO:0000269" key="4">
    <source>
    </source>
</evidence>
<evidence type="ECO:0000305" key="5"/>
<evidence type="ECO:0007744" key="6">
    <source>
    </source>
</evidence>
<reference key="1">
    <citation type="journal article" date="1999" name="Genome Res.">
        <title>Comparative sequence of human and mouse BAC clones from the mnd2 region of chromosome 2p13.</title>
        <authorList>
            <person name="Jang W."/>
            <person name="Hua A."/>
            <person name="Spilson S.V."/>
            <person name="Miller W."/>
            <person name="Roe B.A."/>
            <person name="Meisler M.H."/>
        </authorList>
    </citation>
    <scope>NUCLEOTIDE SEQUENCE [GENOMIC DNA / MRNA]</scope>
    <scope>TISSUE SPECIFICITY</scope>
    <source>
        <strain>129/SvJ</strain>
        <strain>C57BL/6J</strain>
    </source>
</reference>
<reference key="2">
    <citation type="journal article" date="2005" name="Science">
        <title>The transcriptional landscape of the mammalian genome.</title>
        <authorList>
            <person name="Carninci P."/>
            <person name="Kasukawa T."/>
            <person name="Katayama S."/>
            <person name="Gough J."/>
            <person name="Frith M.C."/>
            <person name="Maeda N."/>
            <person name="Oyama R."/>
            <person name="Ravasi T."/>
            <person name="Lenhard B."/>
            <person name="Wells C."/>
            <person name="Kodzius R."/>
            <person name="Shimokawa K."/>
            <person name="Bajic V.B."/>
            <person name="Brenner S.E."/>
            <person name="Batalov S."/>
            <person name="Forrest A.R."/>
            <person name="Zavolan M."/>
            <person name="Davis M.J."/>
            <person name="Wilming L.G."/>
            <person name="Aidinis V."/>
            <person name="Allen J.E."/>
            <person name="Ambesi-Impiombato A."/>
            <person name="Apweiler R."/>
            <person name="Aturaliya R.N."/>
            <person name="Bailey T.L."/>
            <person name="Bansal M."/>
            <person name="Baxter L."/>
            <person name="Beisel K.W."/>
            <person name="Bersano T."/>
            <person name="Bono H."/>
            <person name="Chalk A.M."/>
            <person name="Chiu K.P."/>
            <person name="Choudhary V."/>
            <person name="Christoffels A."/>
            <person name="Clutterbuck D.R."/>
            <person name="Crowe M.L."/>
            <person name="Dalla E."/>
            <person name="Dalrymple B.P."/>
            <person name="de Bono B."/>
            <person name="Della Gatta G."/>
            <person name="di Bernardo D."/>
            <person name="Down T."/>
            <person name="Engstrom P."/>
            <person name="Fagiolini M."/>
            <person name="Faulkner G."/>
            <person name="Fletcher C.F."/>
            <person name="Fukushima T."/>
            <person name="Furuno M."/>
            <person name="Futaki S."/>
            <person name="Gariboldi M."/>
            <person name="Georgii-Hemming P."/>
            <person name="Gingeras T.R."/>
            <person name="Gojobori T."/>
            <person name="Green R.E."/>
            <person name="Gustincich S."/>
            <person name="Harbers M."/>
            <person name="Hayashi Y."/>
            <person name="Hensch T.K."/>
            <person name="Hirokawa N."/>
            <person name="Hill D."/>
            <person name="Huminiecki L."/>
            <person name="Iacono M."/>
            <person name="Ikeo K."/>
            <person name="Iwama A."/>
            <person name="Ishikawa T."/>
            <person name="Jakt M."/>
            <person name="Kanapin A."/>
            <person name="Katoh M."/>
            <person name="Kawasawa Y."/>
            <person name="Kelso J."/>
            <person name="Kitamura H."/>
            <person name="Kitano H."/>
            <person name="Kollias G."/>
            <person name="Krishnan S.P."/>
            <person name="Kruger A."/>
            <person name="Kummerfeld S.K."/>
            <person name="Kurochkin I.V."/>
            <person name="Lareau L.F."/>
            <person name="Lazarevic D."/>
            <person name="Lipovich L."/>
            <person name="Liu J."/>
            <person name="Liuni S."/>
            <person name="McWilliam S."/>
            <person name="Madan Babu M."/>
            <person name="Madera M."/>
            <person name="Marchionni L."/>
            <person name="Matsuda H."/>
            <person name="Matsuzawa S."/>
            <person name="Miki H."/>
            <person name="Mignone F."/>
            <person name="Miyake S."/>
            <person name="Morris K."/>
            <person name="Mottagui-Tabar S."/>
            <person name="Mulder N."/>
            <person name="Nakano N."/>
            <person name="Nakauchi H."/>
            <person name="Ng P."/>
            <person name="Nilsson R."/>
            <person name="Nishiguchi S."/>
            <person name="Nishikawa S."/>
            <person name="Nori F."/>
            <person name="Ohara O."/>
            <person name="Okazaki Y."/>
            <person name="Orlando V."/>
            <person name="Pang K.C."/>
            <person name="Pavan W.J."/>
            <person name="Pavesi G."/>
            <person name="Pesole G."/>
            <person name="Petrovsky N."/>
            <person name="Piazza S."/>
            <person name="Reed J."/>
            <person name="Reid J.F."/>
            <person name="Ring B.Z."/>
            <person name="Ringwald M."/>
            <person name="Rost B."/>
            <person name="Ruan Y."/>
            <person name="Salzberg S.L."/>
            <person name="Sandelin A."/>
            <person name="Schneider C."/>
            <person name="Schoenbach C."/>
            <person name="Sekiguchi K."/>
            <person name="Semple C.A."/>
            <person name="Seno S."/>
            <person name="Sessa L."/>
            <person name="Sheng Y."/>
            <person name="Shibata Y."/>
            <person name="Shimada H."/>
            <person name="Shimada K."/>
            <person name="Silva D."/>
            <person name="Sinclair B."/>
            <person name="Sperling S."/>
            <person name="Stupka E."/>
            <person name="Sugiura K."/>
            <person name="Sultana R."/>
            <person name="Takenaka Y."/>
            <person name="Taki K."/>
            <person name="Tammoja K."/>
            <person name="Tan S.L."/>
            <person name="Tang S."/>
            <person name="Taylor M.S."/>
            <person name="Tegner J."/>
            <person name="Teichmann S.A."/>
            <person name="Ueda H.R."/>
            <person name="van Nimwegen E."/>
            <person name="Verardo R."/>
            <person name="Wei C.L."/>
            <person name="Yagi K."/>
            <person name="Yamanishi H."/>
            <person name="Zabarovsky E."/>
            <person name="Zhu S."/>
            <person name="Zimmer A."/>
            <person name="Hide W."/>
            <person name="Bult C."/>
            <person name="Grimmond S.M."/>
            <person name="Teasdale R.D."/>
            <person name="Liu E.T."/>
            <person name="Brusic V."/>
            <person name="Quackenbush J."/>
            <person name="Wahlestedt C."/>
            <person name="Mattick J.S."/>
            <person name="Hume D.A."/>
            <person name="Kai C."/>
            <person name="Sasaki D."/>
            <person name="Tomaru Y."/>
            <person name="Fukuda S."/>
            <person name="Kanamori-Katayama M."/>
            <person name="Suzuki M."/>
            <person name="Aoki J."/>
            <person name="Arakawa T."/>
            <person name="Iida J."/>
            <person name="Imamura K."/>
            <person name="Itoh M."/>
            <person name="Kato T."/>
            <person name="Kawaji H."/>
            <person name="Kawagashira N."/>
            <person name="Kawashima T."/>
            <person name="Kojima M."/>
            <person name="Kondo S."/>
            <person name="Konno H."/>
            <person name="Nakano K."/>
            <person name="Ninomiya N."/>
            <person name="Nishio T."/>
            <person name="Okada M."/>
            <person name="Plessy C."/>
            <person name="Shibata K."/>
            <person name="Shiraki T."/>
            <person name="Suzuki S."/>
            <person name="Tagami M."/>
            <person name="Waki K."/>
            <person name="Watahiki A."/>
            <person name="Okamura-Oho Y."/>
            <person name="Suzuki H."/>
            <person name="Kawai J."/>
            <person name="Hayashizaki Y."/>
        </authorList>
    </citation>
    <scope>NUCLEOTIDE SEQUENCE [LARGE SCALE MRNA]</scope>
    <source>
        <strain>C57BL/6J</strain>
        <tissue>Embryonic stem cell</tissue>
    </source>
</reference>
<reference key="3">
    <citation type="journal article" date="2004" name="Genome Res.">
        <title>The status, quality, and expansion of the NIH full-length cDNA project: the Mammalian Gene Collection (MGC).</title>
        <authorList>
            <consortium name="The MGC Project Team"/>
        </authorList>
    </citation>
    <scope>NUCLEOTIDE SEQUENCE [LARGE SCALE MRNA]</scope>
</reference>
<reference key="4">
    <citation type="journal article" date="2004" name="Proc. Natl. Acad. Sci. U.S.A.">
        <title>Identification of genes that synergize with Cbfb-MYH11 in the pathogenesis of acute myeloid leukemia.</title>
        <authorList>
            <person name="Castilla L.H."/>
            <person name="Perrat P."/>
            <person name="Martinez N.J."/>
            <person name="Landrette S.F."/>
            <person name="Keys R."/>
            <person name="Oikemus S."/>
            <person name="Flanegan J."/>
            <person name="Heilman S."/>
            <person name="Garrett L."/>
            <person name="Dutra A."/>
            <person name="Anderson S."/>
            <person name="Pihan G.A."/>
            <person name="Wolff L."/>
            <person name="Liu P.P."/>
        </authorList>
    </citation>
    <scope>SYNERGY DURING ACUTE MYELOID LEUKEMIA</scope>
</reference>
<reference key="5">
    <citation type="journal article" date="2006" name="Dev. Dyn.">
        <title>Expression analysis and evolutionary conservation of the mouse germ cell-specific D6Mm5e gene.</title>
        <authorList>
            <person name="Arango N.A."/>
            <person name="Huang T.T."/>
            <person name="Fujino A."/>
            <person name="Pieretti-Vanmarcke R."/>
            <person name="Donahoe P.K."/>
        </authorList>
    </citation>
    <scope>ALTERNATIVE SPLICING</scope>
    <scope>TISSUE SPECIFICITY</scope>
    <scope>DEVELOPMENTAL STAGE</scope>
</reference>
<reference key="6">
    <citation type="journal article" date="2010" name="Cell">
        <title>A tissue-specific atlas of mouse protein phosphorylation and expression.</title>
        <authorList>
            <person name="Huttlin E.L."/>
            <person name="Jedrychowski M.P."/>
            <person name="Elias J.E."/>
            <person name="Goswami T."/>
            <person name="Rad R."/>
            <person name="Beausoleil S.A."/>
            <person name="Villen J."/>
            <person name="Haas W."/>
            <person name="Sowa M.E."/>
            <person name="Gygi S.P."/>
        </authorList>
    </citation>
    <scope>PHOSPHORYLATION [LARGE SCALE ANALYSIS] AT SER-516</scope>
    <scope>IDENTIFICATION BY MASS SPECTROMETRY [LARGE SCALE ANALYSIS]</scope>
    <source>
        <tissue>Testis</tissue>
    </source>
</reference>
<reference key="7">
    <citation type="journal article" date="2013" name="Biol. Reprod.">
        <title>Meiosis I arrest abnormalities lead to severe oligozoospermia in meiosis 1 arresting protein (M1ap)-deficient mice.</title>
        <authorList>
            <person name="Arango N.A."/>
            <person name="Li L."/>
            <person name="Dabir D."/>
            <person name="Nicolau F."/>
            <person name="Pieretti-Vanmarcke R."/>
            <person name="Koehler C."/>
            <person name="McCarrey J.R."/>
            <person name="Lu N."/>
            <person name="Donahoe P.K."/>
        </authorList>
    </citation>
    <scope>FUNCTION</scope>
    <scope>SUBCELLULAR LOCATION</scope>
    <scope>DISRUPTION PHENOTYPE</scope>
    <scope>TISSUE SPECIFICITY</scope>
    <scope>DEVELOPMENTAL STAGE</scope>
</reference>
<accession>Q9Z0E1</accession>
<accession>Q3V2A0</accession>
<proteinExistence type="evidence at protein level"/>
<comment type="function">
    <text evidence="3">Required for meiosis I progression during spermatogenesis.</text>
</comment>
<comment type="subcellular location">
    <subcellularLocation>
        <location evidence="3">Cytoplasm</location>
    </subcellularLocation>
</comment>
<comment type="tissue specificity">
    <text evidence="2 3 4">Expressed in germ cells of the testis. Expressed from spermatogonia to spermatids. Expressed at very low levels in lung, stomach, thymus. Not detected in Sertoli cells.</text>
</comment>
<comment type="developmental stage">
    <text evidence="2 3">Germ cell-specific, but may also be expressed in cells that require the presence of germ cells. Cranial to caudal punctate expression is seen in the developing ovary starting at 13.5 dpc. At 13.5 dpc. expressed in the cranial part of the XX gonad. At 14.5 dpc, expression extends to almost two-thirds of the XX gonad, and by 15.5 dpc expression is seen throughout the entire organ. By 16.5 dpc, expression is only detected in the most caudal tip of the XX gonad. Expression switches from the embryonic ovary to the postnatal testis.</text>
</comment>
<comment type="disruption phenotype">
    <text evidence="3">Males show reduced testicular size and a tubular defects, which led to severe oligozoospermia and infertility. Spermatocytes are eliminated via apoptosis either at the pachytene checkpoint, or later at the spindle checkpoint during metaphase I.</text>
</comment>
<comment type="miscellaneous">
    <text>Seems to synergize with Cbfb and Myh11 during the onset of acute myeloid leukemia.</text>
</comment>
<keyword id="KW-0963">Cytoplasm</keyword>
<keyword id="KW-0221">Differentiation</keyword>
<keyword id="KW-0597">Phosphoprotein</keyword>
<keyword id="KW-1185">Reference proteome</keyword>
<keyword id="KW-0744">Spermatogenesis</keyword>
<dbReference type="EMBL" id="AF084363">
    <property type="protein sequence ID" value="AAC95337.1"/>
    <property type="molecule type" value="Genomic_DNA"/>
</dbReference>
<dbReference type="EMBL" id="AF084364">
    <property type="protein sequence ID" value="AAC95350.1"/>
    <property type="molecule type" value="mRNA"/>
</dbReference>
<dbReference type="EMBL" id="AK131954">
    <property type="protein sequence ID" value="BAE20898.1"/>
    <property type="molecule type" value="mRNA"/>
</dbReference>
<dbReference type="EMBL" id="BC119803">
    <property type="protein sequence ID" value="AAI19804.1"/>
    <property type="molecule type" value="mRNA"/>
</dbReference>
<dbReference type="EMBL" id="BC122521">
    <property type="protein sequence ID" value="AAI22522.1"/>
    <property type="molecule type" value="mRNA"/>
</dbReference>
<dbReference type="CCDS" id="CCDS39525.1"/>
<dbReference type="RefSeq" id="NP_149070.2">
    <property type="nucleotide sequence ID" value="NM_033079.2"/>
</dbReference>
<dbReference type="FunCoup" id="Q9Z0E1">
    <property type="interactions" value="210"/>
</dbReference>
<dbReference type="STRING" id="10090.ENSMUSP00000109613"/>
<dbReference type="iPTMnet" id="Q9Z0E1"/>
<dbReference type="PhosphoSitePlus" id="Q9Z0E1"/>
<dbReference type="SwissPalm" id="Q9Z0E1"/>
<dbReference type="PaxDb" id="10090-ENSMUSP00000109613"/>
<dbReference type="ProteomicsDB" id="292066"/>
<dbReference type="Antibodypedia" id="49889">
    <property type="antibodies" value="35 antibodies from 13 providers"/>
</dbReference>
<dbReference type="Ensembl" id="ENSMUST00000113980.4">
    <property type="protein sequence ID" value="ENSMUSP00000109613.4"/>
    <property type="gene ID" value="ENSMUSG00000030041.10"/>
</dbReference>
<dbReference type="GeneID" id="110958"/>
<dbReference type="KEGG" id="mmu:110958"/>
<dbReference type="UCSC" id="uc009clp.2">
    <property type="organism name" value="mouse"/>
</dbReference>
<dbReference type="AGR" id="MGI:1315200"/>
<dbReference type="CTD" id="130951"/>
<dbReference type="MGI" id="MGI:1315200">
    <property type="gene designation" value="M1ap"/>
</dbReference>
<dbReference type="VEuPathDB" id="HostDB:ENSMUSG00000030041"/>
<dbReference type="eggNOG" id="ENOG502QT91">
    <property type="taxonomic scope" value="Eukaryota"/>
</dbReference>
<dbReference type="GeneTree" id="ENSGT00390000005656"/>
<dbReference type="HOGENOM" id="CLU_038694_0_0_1"/>
<dbReference type="InParanoid" id="Q9Z0E1"/>
<dbReference type="OMA" id="LRKHPCK"/>
<dbReference type="OrthoDB" id="6433824at2759"/>
<dbReference type="PhylomeDB" id="Q9Z0E1"/>
<dbReference type="TreeFam" id="TF329502"/>
<dbReference type="BioGRID-ORCS" id="110958">
    <property type="hits" value="1 hit in 78 CRISPR screens"/>
</dbReference>
<dbReference type="ChiTaRS" id="M1ap">
    <property type="organism name" value="mouse"/>
</dbReference>
<dbReference type="PRO" id="PR:Q9Z0E1"/>
<dbReference type="Proteomes" id="UP000000589">
    <property type="component" value="Chromosome 6"/>
</dbReference>
<dbReference type="RNAct" id="Q9Z0E1">
    <property type="molecule type" value="protein"/>
</dbReference>
<dbReference type="Bgee" id="ENSMUSG00000030041">
    <property type="expression patterns" value="Expressed in seminiferous tubule of testis and 41 other cell types or tissues"/>
</dbReference>
<dbReference type="ExpressionAtlas" id="Q9Z0E1">
    <property type="expression patterns" value="baseline and differential"/>
</dbReference>
<dbReference type="GO" id="GO:0005737">
    <property type="term" value="C:cytoplasm"/>
    <property type="evidence" value="ECO:0000314"/>
    <property type="project" value="UniProtKB"/>
</dbReference>
<dbReference type="GO" id="GO:0016020">
    <property type="term" value="C:membrane"/>
    <property type="evidence" value="ECO:0000303"/>
    <property type="project" value="UniProtKB"/>
</dbReference>
<dbReference type="GO" id="GO:0042802">
    <property type="term" value="F:identical protein binding"/>
    <property type="evidence" value="ECO:0007669"/>
    <property type="project" value="Ensembl"/>
</dbReference>
<dbReference type="GO" id="GO:0030154">
    <property type="term" value="P:cell differentiation"/>
    <property type="evidence" value="ECO:0007669"/>
    <property type="project" value="UniProtKB-KW"/>
</dbReference>
<dbReference type="GO" id="GO:0006325">
    <property type="term" value="P:chromatin organization"/>
    <property type="evidence" value="ECO:0000303"/>
    <property type="project" value="UniProtKB"/>
</dbReference>
<dbReference type="GO" id="GO:0007292">
    <property type="term" value="P:female gamete generation"/>
    <property type="evidence" value="ECO:0000270"/>
    <property type="project" value="UniProtKB"/>
</dbReference>
<dbReference type="GO" id="GO:0051308">
    <property type="term" value="P:male meiosis chromosome separation"/>
    <property type="evidence" value="ECO:0000315"/>
    <property type="project" value="UniProtKB"/>
</dbReference>
<dbReference type="GO" id="GO:0007127">
    <property type="term" value="P:meiosis I"/>
    <property type="evidence" value="ECO:0007669"/>
    <property type="project" value="InterPro"/>
</dbReference>
<dbReference type="GO" id="GO:0006396">
    <property type="term" value="P:RNA processing"/>
    <property type="evidence" value="ECO:0000303"/>
    <property type="project" value="UniProtKB"/>
</dbReference>
<dbReference type="GO" id="GO:0007283">
    <property type="term" value="P:spermatogenesis"/>
    <property type="evidence" value="ECO:0000315"/>
    <property type="project" value="UniProtKB"/>
</dbReference>
<dbReference type="InterPro" id="IPR033587">
    <property type="entry name" value="M1AP"/>
</dbReference>
<dbReference type="PANTHER" id="PTHR28642">
    <property type="entry name" value="MEIOSIS 1 ARREST PROTEIN"/>
    <property type="match status" value="1"/>
</dbReference>
<dbReference type="PANTHER" id="PTHR28642:SF1">
    <property type="entry name" value="MEIOSIS 1 ARREST PROTEIN"/>
    <property type="match status" value="1"/>
</dbReference>
<sequence>MNRRKTTSRGTSAAMKISHQPPRLLIVNIAVPSWVDICPNLCEALQNFFSIACSLMGPSRMSLFSLYTVQNQHECVLPFVQVRGNFIRLQACISELRMLQVEGCHRPPHALLPLAIEDGLQQFKQYSSHMASSAAQPWTSLEITVLTSRPGKEVVKELEEGLKDINLLSVRRLQVAEVTKGIQERSDSPSPTEEPSNDESSILEADIVLETLDNDVVSMEVFFKAWLHNSETDQENIHLLLTPQSLPPPSRAKDHPICLKCDLQERFLSPSLLPGTADGVSRIDDPKGDISTLYQMASLASASPYKLQVVKALKSSGICESLTYGLPFILRPTSCWQLDWDELETNQQHFHALCHCLLKRDWLLLARGEPLIHKHNQSLPACSFYVITPSHSLTLLVKLVATRELMLPGFFPLLSEDPPEDSLKIIESTLDSLDLGLTYNPLHVGSHLYSHLSSAHAKPQGRLYTSCASRGLRKGGQLQTNRVRAAVVPLPVAPAPRRALKMTAASKASSAAFLPSDSEEGEEERPSHT</sequence>
<name>M1AP_MOUSE</name>
<organism>
    <name type="scientific">Mus musculus</name>
    <name type="common">Mouse</name>
    <dbReference type="NCBI Taxonomy" id="10090"/>
    <lineage>
        <taxon>Eukaryota</taxon>
        <taxon>Metazoa</taxon>
        <taxon>Chordata</taxon>
        <taxon>Craniata</taxon>
        <taxon>Vertebrata</taxon>
        <taxon>Euteleostomi</taxon>
        <taxon>Mammalia</taxon>
        <taxon>Eutheria</taxon>
        <taxon>Euarchontoglires</taxon>
        <taxon>Glires</taxon>
        <taxon>Rodentia</taxon>
        <taxon>Myomorpha</taxon>
        <taxon>Muroidea</taxon>
        <taxon>Muridae</taxon>
        <taxon>Murinae</taxon>
        <taxon>Mus</taxon>
        <taxon>Mus</taxon>
    </lineage>
</organism>